<organism>
    <name type="scientific">Psychromonas ingrahamii (strain DSM 17664 / CCUG 51855 / 37)</name>
    <dbReference type="NCBI Taxonomy" id="357804"/>
    <lineage>
        <taxon>Bacteria</taxon>
        <taxon>Pseudomonadati</taxon>
        <taxon>Pseudomonadota</taxon>
        <taxon>Gammaproteobacteria</taxon>
        <taxon>Alteromonadales</taxon>
        <taxon>Psychromonadaceae</taxon>
        <taxon>Psychromonas</taxon>
    </lineage>
</organism>
<dbReference type="EC" id="3.6.1.7"/>
<dbReference type="EMBL" id="CP000510">
    <property type="protein sequence ID" value="ABM03923.1"/>
    <property type="molecule type" value="Genomic_DNA"/>
</dbReference>
<dbReference type="RefSeq" id="WP_011770483.1">
    <property type="nucleotide sequence ID" value="NC_008709.1"/>
</dbReference>
<dbReference type="SMR" id="A1SWQ8"/>
<dbReference type="STRING" id="357804.Ping_2182"/>
<dbReference type="KEGG" id="pin:Ping_2182"/>
<dbReference type="eggNOG" id="COG1254">
    <property type="taxonomic scope" value="Bacteria"/>
</dbReference>
<dbReference type="HOGENOM" id="CLU_141932_1_2_6"/>
<dbReference type="OrthoDB" id="5295388at2"/>
<dbReference type="Proteomes" id="UP000000639">
    <property type="component" value="Chromosome"/>
</dbReference>
<dbReference type="GO" id="GO:0003998">
    <property type="term" value="F:acylphosphatase activity"/>
    <property type="evidence" value="ECO:0007669"/>
    <property type="project" value="UniProtKB-EC"/>
</dbReference>
<dbReference type="Gene3D" id="3.30.70.100">
    <property type="match status" value="1"/>
</dbReference>
<dbReference type="InterPro" id="IPR020456">
    <property type="entry name" value="Acylphosphatase"/>
</dbReference>
<dbReference type="InterPro" id="IPR001792">
    <property type="entry name" value="Acylphosphatase-like_dom"/>
</dbReference>
<dbReference type="InterPro" id="IPR036046">
    <property type="entry name" value="Acylphosphatase-like_dom_sf"/>
</dbReference>
<dbReference type="PANTHER" id="PTHR47268">
    <property type="entry name" value="ACYLPHOSPHATASE"/>
    <property type="match status" value="1"/>
</dbReference>
<dbReference type="PANTHER" id="PTHR47268:SF4">
    <property type="entry name" value="ACYLPHOSPHATASE"/>
    <property type="match status" value="1"/>
</dbReference>
<dbReference type="Pfam" id="PF00708">
    <property type="entry name" value="Acylphosphatase"/>
    <property type="match status" value="1"/>
</dbReference>
<dbReference type="SUPFAM" id="SSF54975">
    <property type="entry name" value="Acylphosphatase/BLUF domain-like"/>
    <property type="match status" value="1"/>
</dbReference>
<dbReference type="PROSITE" id="PS51160">
    <property type="entry name" value="ACYLPHOSPHATASE_3"/>
    <property type="match status" value="1"/>
</dbReference>
<feature type="chain" id="PRO_0000326773" description="Acylphosphatase">
    <location>
        <begin position="1"/>
        <end position="90"/>
    </location>
</feature>
<feature type="domain" description="Acylphosphatase-like" evidence="1">
    <location>
        <begin position="5"/>
        <end position="90"/>
    </location>
</feature>
<feature type="active site" evidence="1">
    <location>
        <position position="20"/>
    </location>
</feature>
<feature type="active site" evidence="1">
    <location>
        <position position="38"/>
    </location>
</feature>
<keyword id="KW-0378">Hydrolase</keyword>
<keyword id="KW-1185">Reference proteome</keyword>
<protein>
    <recommendedName>
        <fullName>Acylphosphatase</fullName>
        <ecNumber>3.6.1.7</ecNumber>
    </recommendedName>
    <alternativeName>
        <fullName>Acylphosphate phosphohydrolase</fullName>
    </alternativeName>
</protein>
<reference key="1">
    <citation type="journal article" date="2008" name="BMC Genomics">
        <title>Genomics of an extreme psychrophile, Psychromonas ingrahamii.</title>
        <authorList>
            <person name="Riley M."/>
            <person name="Staley J.T."/>
            <person name="Danchin A."/>
            <person name="Wang T.Z."/>
            <person name="Brettin T.S."/>
            <person name="Hauser L.J."/>
            <person name="Land M.L."/>
            <person name="Thompson L.S."/>
        </authorList>
    </citation>
    <scope>NUCLEOTIDE SEQUENCE [LARGE SCALE GENOMIC DNA]</scope>
    <source>
        <strain>DSM 17664 / CCUG 51855 / 37</strain>
    </source>
</reference>
<evidence type="ECO:0000255" key="1">
    <source>
        <dbReference type="PROSITE-ProRule" id="PRU00520"/>
    </source>
</evidence>
<evidence type="ECO:0000305" key="2"/>
<sequence>MDNIGCKVIVSGIVQAVGFRYFTCREARLHYVMGHAKNLQCGDVEVVMYGPREQIAKMLKWLEKGPKTARVTGITVSEIPYQKTNDFIAC</sequence>
<name>ACYP_PSYIN</name>
<gene>
    <name type="primary">acyP</name>
    <name type="ordered locus">Ping_2182</name>
</gene>
<accession>A1SWQ8</accession>
<proteinExistence type="inferred from homology"/>
<comment type="catalytic activity">
    <reaction>
        <text>an acyl phosphate + H2O = a carboxylate + phosphate + H(+)</text>
        <dbReference type="Rhea" id="RHEA:14965"/>
        <dbReference type="ChEBI" id="CHEBI:15377"/>
        <dbReference type="ChEBI" id="CHEBI:15378"/>
        <dbReference type="ChEBI" id="CHEBI:29067"/>
        <dbReference type="ChEBI" id="CHEBI:43474"/>
        <dbReference type="ChEBI" id="CHEBI:59918"/>
        <dbReference type="EC" id="3.6.1.7"/>
    </reaction>
</comment>
<comment type="similarity">
    <text evidence="2">Belongs to the acylphosphatase family.</text>
</comment>